<feature type="chain" id="PRO_1000189012" description="Cytochrome c-type biogenesis protein CcmE">
    <location>
        <begin position="1"/>
        <end position="159"/>
    </location>
</feature>
<feature type="topological domain" description="Cytoplasmic" evidence="1">
    <location>
        <begin position="1"/>
        <end position="8"/>
    </location>
</feature>
<feature type="transmembrane region" description="Helical; Signal-anchor for type II membrane protein" evidence="1">
    <location>
        <begin position="9"/>
        <end position="29"/>
    </location>
</feature>
<feature type="topological domain" description="Periplasmic" evidence="1">
    <location>
        <begin position="30"/>
        <end position="159"/>
    </location>
</feature>
<feature type="region of interest" description="Disordered" evidence="2">
    <location>
        <begin position="132"/>
        <end position="159"/>
    </location>
</feature>
<feature type="compositionally biased region" description="Basic and acidic residues" evidence="2">
    <location>
        <begin position="132"/>
        <end position="147"/>
    </location>
</feature>
<feature type="binding site" description="covalent" evidence="1">
    <location>
        <position position="130"/>
    </location>
    <ligand>
        <name>heme</name>
        <dbReference type="ChEBI" id="CHEBI:30413"/>
    </ligand>
</feature>
<feature type="binding site" description="axial binding residue" evidence="1">
    <location>
        <position position="134"/>
    </location>
    <ligand>
        <name>heme</name>
        <dbReference type="ChEBI" id="CHEBI:30413"/>
    </ligand>
    <ligandPart>
        <name>Fe</name>
        <dbReference type="ChEBI" id="CHEBI:18248"/>
    </ligandPart>
</feature>
<evidence type="ECO:0000255" key="1">
    <source>
        <dbReference type="HAMAP-Rule" id="MF_01959"/>
    </source>
</evidence>
<evidence type="ECO:0000256" key="2">
    <source>
        <dbReference type="SAM" id="MobiDB-lite"/>
    </source>
</evidence>
<proteinExistence type="inferred from homology"/>
<sequence>MNIRRKNRLWIACAVLAGLALTIGLVLYALRSNIDLFYTPGEILYGKRETQQMPEVGQRLRVGGMVMPGSVQRDPNSLKVTFTIYDAEGSVDVSYEGILPDLFREGQGVVVQGELEKGNHILAKEVLAKHDENYTPPEVEKAMEANHRRPASVYKDPAS</sequence>
<dbReference type="EMBL" id="FM180568">
    <property type="protein sequence ID" value="CAS09889.1"/>
    <property type="molecule type" value="Genomic_DNA"/>
</dbReference>
<dbReference type="RefSeq" id="WP_001026418.1">
    <property type="nucleotide sequence ID" value="NC_011601.1"/>
</dbReference>
<dbReference type="SMR" id="B7UFL0"/>
<dbReference type="GeneID" id="86860369"/>
<dbReference type="KEGG" id="ecg:E2348C_2341"/>
<dbReference type="HOGENOM" id="CLU_079503_1_0_6"/>
<dbReference type="Proteomes" id="UP000008205">
    <property type="component" value="Chromosome"/>
</dbReference>
<dbReference type="GO" id="GO:0005886">
    <property type="term" value="C:plasma membrane"/>
    <property type="evidence" value="ECO:0007669"/>
    <property type="project" value="UniProtKB-SubCell"/>
</dbReference>
<dbReference type="GO" id="GO:0020037">
    <property type="term" value="F:heme binding"/>
    <property type="evidence" value="ECO:0007669"/>
    <property type="project" value="InterPro"/>
</dbReference>
<dbReference type="GO" id="GO:0046872">
    <property type="term" value="F:metal ion binding"/>
    <property type="evidence" value="ECO:0007669"/>
    <property type="project" value="UniProtKB-KW"/>
</dbReference>
<dbReference type="GO" id="GO:0017004">
    <property type="term" value="P:cytochrome complex assembly"/>
    <property type="evidence" value="ECO:0007669"/>
    <property type="project" value="UniProtKB-KW"/>
</dbReference>
<dbReference type="FunFam" id="2.40.50.140:FF:000104">
    <property type="entry name" value="Cytochrome c-type biogenesis protein CcmE"/>
    <property type="match status" value="1"/>
</dbReference>
<dbReference type="Gene3D" id="2.40.50.140">
    <property type="entry name" value="Nucleic acid-binding proteins"/>
    <property type="match status" value="1"/>
</dbReference>
<dbReference type="HAMAP" id="MF_01959">
    <property type="entry name" value="CcmE"/>
    <property type="match status" value="1"/>
</dbReference>
<dbReference type="InterPro" id="IPR004329">
    <property type="entry name" value="CcmE"/>
</dbReference>
<dbReference type="InterPro" id="IPR036127">
    <property type="entry name" value="CcmE-like_sf"/>
</dbReference>
<dbReference type="InterPro" id="IPR012340">
    <property type="entry name" value="NA-bd_OB-fold"/>
</dbReference>
<dbReference type="NCBIfam" id="NF009635">
    <property type="entry name" value="PRK13150.1"/>
    <property type="match status" value="1"/>
</dbReference>
<dbReference type="NCBIfam" id="NF009638">
    <property type="entry name" value="PRK13165.1"/>
    <property type="match status" value="1"/>
</dbReference>
<dbReference type="NCBIfam" id="NF009727">
    <property type="entry name" value="PRK13254.1-1"/>
    <property type="match status" value="1"/>
</dbReference>
<dbReference type="NCBIfam" id="NF009729">
    <property type="entry name" value="PRK13254.1-3"/>
    <property type="match status" value="1"/>
</dbReference>
<dbReference type="PANTHER" id="PTHR34128">
    <property type="entry name" value="CYTOCHROME C-TYPE BIOGENESIS PROTEIN CCME HOMOLOG, MITOCHONDRIAL"/>
    <property type="match status" value="1"/>
</dbReference>
<dbReference type="PANTHER" id="PTHR34128:SF2">
    <property type="entry name" value="CYTOCHROME C-TYPE BIOGENESIS PROTEIN CCME HOMOLOG, MITOCHONDRIAL"/>
    <property type="match status" value="1"/>
</dbReference>
<dbReference type="Pfam" id="PF03100">
    <property type="entry name" value="CcmE"/>
    <property type="match status" value="1"/>
</dbReference>
<dbReference type="SUPFAM" id="SSF82093">
    <property type="entry name" value="Heme chaperone CcmE"/>
    <property type="match status" value="1"/>
</dbReference>
<gene>
    <name evidence="1" type="primary">ccmE</name>
    <name evidence="1" type="synonym">cycJ</name>
    <name type="ordered locus">E2348C_2341</name>
</gene>
<protein>
    <recommendedName>
        <fullName evidence="1">Cytochrome c-type biogenesis protein CcmE</fullName>
    </recommendedName>
    <alternativeName>
        <fullName evidence="1">Cytochrome c maturation protein E</fullName>
    </alternativeName>
    <alternativeName>
        <fullName evidence="1">Heme chaperone CcmE</fullName>
    </alternativeName>
</protein>
<reference key="1">
    <citation type="journal article" date="2009" name="J. Bacteriol.">
        <title>Complete genome sequence and comparative genome analysis of enteropathogenic Escherichia coli O127:H6 strain E2348/69.</title>
        <authorList>
            <person name="Iguchi A."/>
            <person name="Thomson N.R."/>
            <person name="Ogura Y."/>
            <person name="Saunders D."/>
            <person name="Ooka T."/>
            <person name="Henderson I.R."/>
            <person name="Harris D."/>
            <person name="Asadulghani M."/>
            <person name="Kurokawa K."/>
            <person name="Dean P."/>
            <person name="Kenny B."/>
            <person name="Quail M.A."/>
            <person name="Thurston S."/>
            <person name="Dougan G."/>
            <person name="Hayashi T."/>
            <person name="Parkhill J."/>
            <person name="Frankel G."/>
        </authorList>
    </citation>
    <scope>NUCLEOTIDE SEQUENCE [LARGE SCALE GENOMIC DNA]</scope>
    <source>
        <strain>E2348/69 / EPEC</strain>
    </source>
</reference>
<comment type="function">
    <text evidence="1">Heme chaperone required for the biogenesis of c-type cytochromes. Transiently binds heme delivered by CcmC and transfers the heme to apo-cytochromes in a process facilitated by CcmF and CcmH.</text>
</comment>
<comment type="subcellular location">
    <subcellularLocation>
        <location evidence="1">Cell inner membrane</location>
        <topology evidence="1">Single-pass type II membrane protein</topology>
        <orientation evidence="1">Periplasmic side</orientation>
    </subcellularLocation>
</comment>
<comment type="similarity">
    <text evidence="1">Belongs to the CcmE/CycJ family.</text>
</comment>
<keyword id="KW-0997">Cell inner membrane</keyword>
<keyword id="KW-1003">Cell membrane</keyword>
<keyword id="KW-0201">Cytochrome c-type biogenesis</keyword>
<keyword id="KW-0349">Heme</keyword>
<keyword id="KW-0408">Iron</keyword>
<keyword id="KW-0472">Membrane</keyword>
<keyword id="KW-0479">Metal-binding</keyword>
<keyword id="KW-1185">Reference proteome</keyword>
<keyword id="KW-0735">Signal-anchor</keyword>
<keyword id="KW-0812">Transmembrane</keyword>
<keyword id="KW-1133">Transmembrane helix</keyword>
<name>CCME_ECO27</name>
<accession>B7UFL0</accession>
<organism>
    <name type="scientific">Escherichia coli O127:H6 (strain E2348/69 / EPEC)</name>
    <dbReference type="NCBI Taxonomy" id="574521"/>
    <lineage>
        <taxon>Bacteria</taxon>
        <taxon>Pseudomonadati</taxon>
        <taxon>Pseudomonadota</taxon>
        <taxon>Gammaproteobacteria</taxon>
        <taxon>Enterobacterales</taxon>
        <taxon>Enterobacteriaceae</taxon>
        <taxon>Escherichia</taxon>
    </lineage>
</organism>